<keyword id="KW-1003">Cell membrane</keyword>
<keyword id="KW-0968">Cytoplasmic vesicle</keyword>
<keyword id="KW-0967">Endosome</keyword>
<keyword id="KW-0342">GTP-binding</keyword>
<keyword id="KW-0378">Hydrolase</keyword>
<keyword id="KW-0449">Lipoprotein</keyword>
<keyword id="KW-0460">Magnesium</keyword>
<keyword id="KW-0472">Membrane</keyword>
<keyword id="KW-0479">Metal-binding</keyword>
<keyword id="KW-0488">Methylation</keyword>
<keyword id="KW-0547">Nucleotide-binding</keyword>
<keyword id="KW-0597">Phosphoprotein</keyword>
<keyword id="KW-0636">Prenylation</keyword>
<keyword id="KW-0653">Protein transport</keyword>
<keyword id="KW-1267">Proteomics identification</keyword>
<keyword id="KW-1185">Reference proteome</keyword>
<keyword id="KW-0813">Transport</keyword>
<proteinExistence type="evidence at protein level"/>
<gene>
    <name evidence="12" type="primary">RAB8B</name>
</gene>
<organism>
    <name type="scientific">Homo sapiens</name>
    <name type="common">Human</name>
    <dbReference type="NCBI Taxonomy" id="9606"/>
    <lineage>
        <taxon>Eukaryota</taxon>
        <taxon>Metazoa</taxon>
        <taxon>Chordata</taxon>
        <taxon>Craniata</taxon>
        <taxon>Vertebrata</taxon>
        <taxon>Euteleostomi</taxon>
        <taxon>Mammalia</taxon>
        <taxon>Eutheria</taxon>
        <taxon>Euarchontoglires</taxon>
        <taxon>Primates</taxon>
        <taxon>Haplorrhini</taxon>
        <taxon>Catarrhini</taxon>
        <taxon>Hominidae</taxon>
        <taxon>Homo</taxon>
    </lineage>
</organism>
<name>RAB8B_HUMAN</name>
<reference key="1">
    <citation type="submission" date="2000-02" db="EMBL/GenBank/DDBJ databases">
        <authorList>
            <person name="Seki N."/>
            <person name="Saito T."/>
        </authorList>
    </citation>
    <scope>NUCLEOTIDE SEQUENCE [MRNA]</scope>
    <source>
        <tissue>Fetal brain</tissue>
    </source>
</reference>
<reference key="2">
    <citation type="journal article" date="2004" name="Nat. Genet.">
        <title>Complete sequencing and characterization of 21,243 full-length human cDNAs.</title>
        <authorList>
            <person name="Ota T."/>
            <person name="Suzuki Y."/>
            <person name="Nishikawa T."/>
            <person name="Otsuki T."/>
            <person name="Sugiyama T."/>
            <person name="Irie R."/>
            <person name="Wakamatsu A."/>
            <person name="Hayashi K."/>
            <person name="Sato H."/>
            <person name="Nagai K."/>
            <person name="Kimura K."/>
            <person name="Makita H."/>
            <person name="Sekine M."/>
            <person name="Obayashi M."/>
            <person name="Nishi T."/>
            <person name="Shibahara T."/>
            <person name="Tanaka T."/>
            <person name="Ishii S."/>
            <person name="Yamamoto J."/>
            <person name="Saito K."/>
            <person name="Kawai Y."/>
            <person name="Isono Y."/>
            <person name="Nakamura Y."/>
            <person name="Nagahari K."/>
            <person name="Murakami K."/>
            <person name="Yasuda T."/>
            <person name="Iwayanagi T."/>
            <person name="Wagatsuma M."/>
            <person name="Shiratori A."/>
            <person name="Sudo H."/>
            <person name="Hosoiri T."/>
            <person name="Kaku Y."/>
            <person name="Kodaira H."/>
            <person name="Kondo H."/>
            <person name="Sugawara M."/>
            <person name="Takahashi M."/>
            <person name="Kanda K."/>
            <person name="Yokoi T."/>
            <person name="Furuya T."/>
            <person name="Kikkawa E."/>
            <person name="Omura Y."/>
            <person name="Abe K."/>
            <person name="Kamihara K."/>
            <person name="Katsuta N."/>
            <person name="Sato K."/>
            <person name="Tanikawa M."/>
            <person name="Yamazaki M."/>
            <person name="Ninomiya K."/>
            <person name="Ishibashi T."/>
            <person name="Yamashita H."/>
            <person name="Murakawa K."/>
            <person name="Fujimori K."/>
            <person name="Tanai H."/>
            <person name="Kimata M."/>
            <person name="Watanabe M."/>
            <person name="Hiraoka S."/>
            <person name="Chiba Y."/>
            <person name="Ishida S."/>
            <person name="Ono Y."/>
            <person name="Takiguchi S."/>
            <person name="Watanabe S."/>
            <person name="Yosida M."/>
            <person name="Hotuta T."/>
            <person name="Kusano J."/>
            <person name="Kanehori K."/>
            <person name="Takahashi-Fujii A."/>
            <person name="Hara H."/>
            <person name="Tanase T.-O."/>
            <person name="Nomura Y."/>
            <person name="Togiya S."/>
            <person name="Komai F."/>
            <person name="Hara R."/>
            <person name="Takeuchi K."/>
            <person name="Arita M."/>
            <person name="Imose N."/>
            <person name="Musashino K."/>
            <person name="Yuuki H."/>
            <person name="Oshima A."/>
            <person name="Sasaki N."/>
            <person name="Aotsuka S."/>
            <person name="Yoshikawa Y."/>
            <person name="Matsunawa H."/>
            <person name="Ichihara T."/>
            <person name="Shiohata N."/>
            <person name="Sano S."/>
            <person name="Moriya S."/>
            <person name="Momiyama H."/>
            <person name="Satoh N."/>
            <person name="Takami S."/>
            <person name="Terashima Y."/>
            <person name="Suzuki O."/>
            <person name="Nakagawa S."/>
            <person name="Senoh A."/>
            <person name="Mizoguchi H."/>
            <person name="Goto Y."/>
            <person name="Shimizu F."/>
            <person name="Wakebe H."/>
            <person name="Hishigaki H."/>
            <person name="Watanabe T."/>
            <person name="Sugiyama A."/>
            <person name="Takemoto M."/>
            <person name="Kawakami B."/>
            <person name="Yamazaki M."/>
            <person name="Watanabe K."/>
            <person name="Kumagai A."/>
            <person name="Itakura S."/>
            <person name="Fukuzumi Y."/>
            <person name="Fujimori Y."/>
            <person name="Komiyama M."/>
            <person name="Tashiro H."/>
            <person name="Tanigami A."/>
            <person name="Fujiwara T."/>
            <person name="Ono T."/>
            <person name="Yamada K."/>
            <person name="Fujii Y."/>
            <person name="Ozaki K."/>
            <person name="Hirao M."/>
            <person name="Ohmori Y."/>
            <person name="Kawabata A."/>
            <person name="Hikiji T."/>
            <person name="Kobatake N."/>
            <person name="Inagaki H."/>
            <person name="Ikema Y."/>
            <person name="Okamoto S."/>
            <person name="Okitani R."/>
            <person name="Kawakami T."/>
            <person name="Noguchi S."/>
            <person name="Itoh T."/>
            <person name="Shigeta K."/>
            <person name="Senba T."/>
            <person name="Matsumura K."/>
            <person name="Nakajima Y."/>
            <person name="Mizuno T."/>
            <person name="Morinaga M."/>
            <person name="Sasaki M."/>
            <person name="Togashi T."/>
            <person name="Oyama M."/>
            <person name="Hata H."/>
            <person name="Watanabe M."/>
            <person name="Komatsu T."/>
            <person name="Mizushima-Sugano J."/>
            <person name="Satoh T."/>
            <person name="Shirai Y."/>
            <person name="Takahashi Y."/>
            <person name="Nakagawa K."/>
            <person name="Okumura K."/>
            <person name="Nagase T."/>
            <person name="Nomura N."/>
            <person name="Kikuchi H."/>
            <person name="Masuho Y."/>
            <person name="Yamashita R."/>
            <person name="Nakai K."/>
            <person name="Yada T."/>
            <person name="Nakamura Y."/>
            <person name="Ohara O."/>
            <person name="Isogai T."/>
            <person name="Sugano S."/>
        </authorList>
    </citation>
    <scope>NUCLEOTIDE SEQUENCE [LARGE SCALE MRNA]</scope>
    <source>
        <tissue>Embryo</tissue>
    </source>
</reference>
<reference key="3">
    <citation type="journal article" date="2007" name="BMC Genomics">
        <title>The full-ORF clone resource of the German cDNA consortium.</title>
        <authorList>
            <person name="Bechtel S."/>
            <person name="Rosenfelder H."/>
            <person name="Duda A."/>
            <person name="Schmidt C.P."/>
            <person name="Ernst U."/>
            <person name="Wellenreuther R."/>
            <person name="Mehrle A."/>
            <person name="Schuster C."/>
            <person name="Bahr A."/>
            <person name="Bloecker H."/>
            <person name="Heubner D."/>
            <person name="Hoerlein A."/>
            <person name="Michel G."/>
            <person name="Wedler H."/>
            <person name="Koehrer K."/>
            <person name="Ottenwaelder B."/>
            <person name="Poustka A."/>
            <person name="Wiemann S."/>
            <person name="Schupp I."/>
        </authorList>
    </citation>
    <scope>NUCLEOTIDE SEQUENCE [LARGE SCALE MRNA]</scope>
    <source>
        <tissue>Lymph node</tissue>
    </source>
</reference>
<reference key="4">
    <citation type="journal article" date="2006" name="Nature">
        <title>Analysis of the DNA sequence and duplication history of human chromosome 15.</title>
        <authorList>
            <person name="Zody M.C."/>
            <person name="Garber M."/>
            <person name="Sharpe T."/>
            <person name="Young S.K."/>
            <person name="Rowen L."/>
            <person name="O'Neill K."/>
            <person name="Whittaker C.A."/>
            <person name="Kamal M."/>
            <person name="Chang J.L."/>
            <person name="Cuomo C.A."/>
            <person name="Dewar K."/>
            <person name="FitzGerald M.G."/>
            <person name="Kodira C.D."/>
            <person name="Madan A."/>
            <person name="Qin S."/>
            <person name="Yang X."/>
            <person name="Abbasi N."/>
            <person name="Abouelleil A."/>
            <person name="Arachchi H.M."/>
            <person name="Baradarani L."/>
            <person name="Birditt B."/>
            <person name="Bloom S."/>
            <person name="Bloom T."/>
            <person name="Borowsky M.L."/>
            <person name="Burke J."/>
            <person name="Butler J."/>
            <person name="Cook A."/>
            <person name="DeArellano K."/>
            <person name="DeCaprio D."/>
            <person name="Dorris L. III"/>
            <person name="Dors M."/>
            <person name="Eichler E.E."/>
            <person name="Engels R."/>
            <person name="Fahey J."/>
            <person name="Fleetwood P."/>
            <person name="Friedman C."/>
            <person name="Gearin G."/>
            <person name="Hall J.L."/>
            <person name="Hensley G."/>
            <person name="Johnson E."/>
            <person name="Jones C."/>
            <person name="Kamat A."/>
            <person name="Kaur A."/>
            <person name="Locke D.P."/>
            <person name="Madan A."/>
            <person name="Munson G."/>
            <person name="Jaffe D.B."/>
            <person name="Lui A."/>
            <person name="Macdonald P."/>
            <person name="Mauceli E."/>
            <person name="Naylor J.W."/>
            <person name="Nesbitt R."/>
            <person name="Nicol R."/>
            <person name="O'Leary S.B."/>
            <person name="Ratcliffe A."/>
            <person name="Rounsley S."/>
            <person name="She X."/>
            <person name="Sneddon K.M.B."/>
            <person name="Stewart S."/>
            <person name="Sougnez C."/>
            <person name="Stone S.M."/>
            <person name="Topham K."/>
            <person name="Vincent D."/>
            <person name="Wang S."/>
            <person name="Zimmer A.R."/>
            <person name="Birren B.W."/>
            <person name="Hood L."/>
            <person name="Lander E.S."/>
            <person name="Nusbaum C."/>
        </authorList>
    </citation>
    <scope>NUCLEOTIDE SEQUENCE [LARGE SCALE GENOMIC DNA]</scope>
</reference>
<reference key="5">
    <citation type="journal article" date="2004" name="Genome Res.">
        <title>The status, quality, and expansion of the NIH full-length cDNA project: the Mammalian Gene Collection (MGC).</title>
        <authorList>
            <consortium name="The MGC Project Team"/>
        </authorList>
    </citation>
    <scope>NUCLEOTIDE SEQUENCE [LARGE SCALE MRNA]</scope>
    <source>
        <tissue>Lung</tissue>
    </source>
</reference>
<reference key="6">
    <citation type="journal article" date="1997" name="Biochim. Biophys. Acta">
        <title>RAB GTPases expressed in human melanoma cells.</title>
        <authorList>
            <person name="Chen D."/>
            <person name="Guo J."/>
            <person name="Gahl W.A."/>
        </authorList>
    </citation>
    <scope>NUCLEOTIDE SEQUENCE [MRNA] OF 67-119</scope>
    <source>
        <tissue>Melanoma</tissue>
    </source>
</reference>
<reference key="7">
    <citation type="journal article" date="2002" name="Mol. Biol. Cell">
        <title>A Rab8-specific GDP/GTP exchange factor is involved in actin remodeling and polarized membrane transport.</title>
        <authorList>
            <person name="Hattula K."/>
            <person name="Furuhjelm J."/>
            <person name="Arffman A."/>
            <person name="Peranen J."/>
        </authorList>
    </citation>
    <scope>INTERACTION WITH RAB3IP</scope>
    <scope>ACTIVITY REGULATION</scope>
    <source>
        <tissue>Brain</tissue>
    </source>
</reference>
<reference key="8">
    <citation type="journal article" date="2009" name="Sci. Signal.">
        <title>Quantitative phosphoproteomic analysis of T cell receptor signaling reveals system-wide modulation of protein-protein interactions.</title>
        <authorList>
            <person name="Mayya V."/>
            <person name="Lundgren D.H."/>
            <person name="Hwang S.-I."/>
            <person name="Rezaul K."/>
            <person name="Wu L."/>
            <person name="Eng J.K."/>
            <person name="Rodionov V."/>
            <person name="Han D.K."/>
        </authorList>
    </citation>
    <scope>IDENTIFICATION BY MASS SPECTROMETRY [LARGE SCALE ANALYSIS]</scope>
    <source>
        <tissue>Leukemic T-cell</tissue>
    </source>
</reference>
<reference key="9">
    <citation type="journal article" date="2011" name="BMC Syst. Biol.">
        <title>Initial characterization of the human central proteome.</title>
        <authorList>
            <person name="Burkard T.R."/>
            <person name="Planyavsky M."/>
            <person name="Kaupe I."/>
            <person name="Breitwieser F.P."/>
            <person name="Buerckstuemmer T."/>
            <person name="Bennett K.L."/>
            <person name="Superti-Furga G."/>
            <person name="Colinge J."/>
        </authorList>
    </citation>
    <scope>IDENTIFICATION BY MASS SPECTROMETRY [LARGE SCALE ANALYSIS]</scope>
</reference>
<reference key="10">
    <citation type="journal article" date="2011" name="Traffic">
        <title>Rab GTPases regulating phagosome maturation are differentially recruited to mycobacterial phagosomes.</title>
        <authorList>
            <person name="Seto S."/>
            <person name="Tsujimura K."/>
            <person name="Koide Y."/>
        </authorList>
    </citation>
    <scope>SUBCELLULAR LOCATION</scope>
</reference>
<reference key="11">
    <citation type="journal article" date="2017" name="Elife">
        <title>Systematic proteomic analysis of LRRK2-mediated Rab GTPase phosphorylation establishes a connection to ciliogenesis.</title>
        <authorList>
            <person name="Steger M."/>
            <person name="Diez F."/>
            <person name="Dhekne H.S."/>
            <person name="Lis P."/>
            <person name="Nirujogi R.S."/>
            <person name="Karayel O."/>
            <person name="Tonelli F."/>
            <person name="Martinez T.N."/>
            <person name="Lorentzen E."/>
            <person name="Pfeffer S.R."/>
            <person name="Alessi D.R."/>
            <person name="Mann M."/>
        </authorList>
    </citation>
    <scope>INTERACTION WITH GDI1; GDI2; CHM AND CHML</scope>
    <scope>PHOSPHORYLATION AT THR-72</scope>
    <scope>MUTAGENESIS OF THR-72</scope>
</reference>
<reference key="12">
    <citation type="journal article" date="2020" name="J. Cell Biol.">
        <title>GRAF2, WDR44, and MICAL1 mediate Rab8/10/11-dependent export of E-cadherin, MMP14, and CFTR DeltaF508.</title>
        <authorList>
            <person name="Lucken-Ardjomande Haesler S."/>
            <person name="Vallis Y."/>
            <person name="Pasche M."/>
            <person name="McMahon H.T."/>
        </authorList>
    </citation>
    <scope>FUNCTION</scope>
    <scope>INTERACTION WITH MICAL1</scope>
    <scope>SUBCELLULAR LOCATION</scope>
</reference>
<evidence type="ECO:0000250" key="1"/>
<evidence type="ECO:0000250" key="2">
    <source>
        <dbReference type="UniProtKB" id="P61006"/>
    </source>
</evidence>
<evidence type="ECO:0000250" key="3">
    <source>
        <dbReference type="UniProtKB" id="P61028"/>
    </source>
</evidence>
<evidence type="ECO:0000250" key="4">
    <source>
        <dbReference type="UniProtKB" id="P62820"/>
    </source>
</evidence>
<evidence type="ECO:0000250" key="5">
    <source>
        <dbReference type="UniProtKB" id="P70550"/>
    </source>
</evidence>
<evidence type="ECO:0000255" key="6"/>
<evidence type="ECO:0000269" key="7">
    <source>
    </source>
</evidence>
<evidence type="ECO:0000269" key="8">
    <source>
    </source>
</evidence>
<evidence type="ECO:0000269" key="9">
    <source>
    </source>
</evidence>
<evidence type="ECO:0000269" key="10">
    <source>
    </source>
</evidence>
<evidence type="ECO:0000305" key="11"/>
<evidence type="ECO:0000312" key="12">
    <source>
        <dbReference type="HGNC" id="HGNC:30273"/>
    </source>
</evidence>
<protein>
    <recommendedName>
        <fullName>Ras-related protein Rab-8B</fullName>
        <ecNumber evidence="2">3.6.5.2</ecNumber>
    </recommendedName>
</protein>
<accession>Q92930</accession>
<accession>Q5JPC4</accession>
<accession>Q9P293</accession>
<sequence length="207" mass="23584">MAKTYDYLFKLLLIGDSGVGKTCLLFRFSEDAFNTTFISTIGIDFKIRTIELDGKKIKLQIWDTAGQERFRTITTAYYRGAMGIMLVYDITNEKSFDNIKNWIRNIEEHASSDVERMILGNKCDMNDKRQVSKERGEKLAIDYGIKFLETSAKSSANVEEAFFTLARDIMTKLNRKMNDSNSAGAGGPVKITENRSKKTSFFRCSLL</sequence>
<dbReference type="EC" id="3.6.5.2" evidence="2"/>
<dbReference type="EMBL" id="AB038995">
    <property type="protein sequence ID" value="BAA92249.1"/>
    <property type="molecule type" value="mRNA"/>
</dbReference>
<dbReference type="EMBL" id="AK001111">
    <property type="protein sequence ID" value="BAG50856.1"/>
    <property type="molecule type" value="mRNA"/>
</dbReference>
<dbReference type="EMBL" id="AL833365">
    <property type="protein sequence ID" value="CAI46143.1"/>
    <property type="molecule type" value="mRNA"/>
</dbReference>
<dbReference type="EMBL" id="AC016207">
    <property type="status" value="NOT_ANNOTATED_CDS"/>
    <property type="molecule type" value="Genomic_DNA"/>
</dbReference>
<dbReference type="EMBL" id="BC020654">
    <property type="protein sequence ID" value="AAH20654.1"/>
    <property type="molecule type" value="mRNA"/>
</dbReference>
<dbReference type="EMBL" id="U66624">
    <property type="protein sequence ID" value="AAC51199.1"/>
    <property type="molecule type" value="mRNA"/>
</dbReference>
<dbReference type="CCDS" id="CCDS10183.1"/>
<dbReference type="RefSeq" id="NP_057614.1">
    <property type="nucleotide sequence ID" value="NM_016530.3"/>
</dbReference>
<dbReference type="SMR" id="Q92930"/>
<dbReference type="BioGRID" id="119719">
    <property type="interactions" value="90"/>
</dbReference>
<dbReference type="FunCoup" id="Q92930">
    <property type="interactions" value="2617"/>
</dbReference>
<dbReference type="IntAct" id="Q92930">
    <property type="interactions" value="34"/>
</dbReference>
<dbReference type="MINT" id="Q92930"/>
<dbReference type="STRING" id="9606.ENSP00000312734"/>
<dbReference type="DrugBank" id="DB04315">
    <property type="generic name" value="Guanosine-5'-Diphosphate"/>
</dbReference>
<dbReference type="DrugBank" id="DB02082">
    <property type="generic name" value="Phosphoaminophosphonic acid guanylate ester"/>
</dbReference>
<dbReference type="GlyCosmos" id="Q92930">
    <property type="glycosylation" value="2 sites, 1 glycan"/>
</dbReference>
<dbReference type="GlyGen" id="Q92930">
    <property type="glycosylation" value="2 sites, 1 O-linked glycan (2 sites)"/>
</dbReference>
<dbReference type="iPTMnet" id="Q92930"/>
<dbReference type="PhosphoSitePlus" id="Q92930"/>
<dbReference type="SwissPalm" id="Q92930"/>
<dbReference type="BioMuta" id="RAB8B"/>
<dbReference type="DMDM" id="13638434"/>
<dbReference type="jPOST" id="Q92930"/>
<dbReference type="MassIVE" id="Q92930"/>
<dbReference type="PaxDb" id="9606-ENSP00000312734"/>
<dbReference type="PeptideAtlas" id="Q92930"/>
<dbReference type="ProteomicsDB" id="75610"/>
<dbReference type="Pumba" id="Q92930"/>
<dbReference type="Antibodypedia" id="25649">
    <property type="antibodies" value="253 antibodies from 31 providers"/>
</dbReference>
<dbReference type="DNASU" id="51762"/>
<dbReference type="Ensembl" id="ENST00000321437.9">
    <property type="protein sequence ID" value="ENSP00000312734.4"/>
    <property type="gene ID" value="ENSG00000166128.13"/>
</dbReference>
<dbReference type="GeneID" id="51762"/>
<dbReference type="KEGG" id="hsa:51762"/>
<dbReference type="MANE-Select" id="ENST00000321437.9">
    <property type="protein sequence ID" value="ENSP00000312734.4"/>
    <property type="RefSeq nucleotide sequence ID" value="NM_016530.3"/>
    <property type="RefSeq protein sequence ID" value="NP_057614.1"/>
</dbReference>
<dbReference type="UCSC" id="uc002alz.4">
    <property type="organism name" value="human"/>
</dbReference>
<dbReference type="AGR" id="HGNC:30273"/>
<dbReference type="CTD" id="51762"/>
<dbReference type="DisGeNET" id="51762"/>
<dbReference type="GeneCards" id="RAB8B"/>
<dbReference type="HGNC" id="HGNC:30273">
    <property type="gene designation" value="RAB8B"/>
</dbReference>
<dbReference type="HPA" id="ENSG00000166128">
    <property type="expression patterns" value="Tissue enhanced (bone)"/>
</dbReference>
<dbReference type="MIM" id="613532">
    <property type="type" value="gene"/>
</dbReference>
<dbReference type="neXtProt" id="NX_Q92930"/>
<dbReference type="OpenTargets" id="ENSG00000166128"/>
<dbReference type="PharmGKB" id="PA134944620"/>
<dbReference type="VEuPathDB" id="HostDB:ENSG00000166128"/>
<dbReference type="eggNOG" id="KOG0078">
    <property type="taxonomic scope" value="Eukaryota"/>
</dbReference>
<dbReference type="GeneTree" id="ENSGT00940000155363"/>
<dbReference type="InParanoid" id="Q92930"/>
<dbReference type="OMA" id="FDWLIKI"/>
<dbReference type="OrthoDB" id="9989112at2759"/>
<dbReference type="PAN-GO" id="Q92930">
    <property type="GO annotations" value="11 GO annotations based on evolutionary models"/>
</dbReference>
<dbReference type="PhylomeDB" id="Q92930"/>
<dbReference type="TreeFam" id="TF314097"/>
<dbReference type="PathwayCommons" id="Q92930"/>
<dbReference type="Reactome" id="R-HSA-8854214">
    <property type="pathway name" value="TBC/RABGAPs"/>
</dbReference>
<dbReference type="Reactome" id="R-HSA-8873719">
    <property type="pathway name" value="RAB geranylgeranylation"/>
</dbReference>
<dbReference type="Reactome" id="R-HSA-8876198">
    <property type="pathway name" value="RAB GEFs exchange GTP for GDP on RABs"/>
</dbReference>
<dbReference type="SignaLink" id="Q92930"/>
<dbReference type="BioGRID-ORCS" id="51762">
    <property type="hits" value="8 hits in 1155 CRISPR screens"/>
</dbReference>
<dbReference type="CD-CODE" id="91857CE7">
    <property type="entry name" value="Nucleolus"/>
</dbReference>
<dbReference type="CD-CODE" id="FB4E32DD">
    <property type="entry name" value="Presynaptic clusters and postsynaptic densities"/>
</dbReference>
<dbReference type="ChiTaRS" id="RAB8B">
    <property type="organism name" value="human"/>
</dbReference>
<dbReference type="GeneWiki" id="RAB8B"/>
<dbReference type="GenomeRNAi" id="51762"/>
<dbReference type="Pharos" id="Q92930">
    <property type="development level" value="Tbio"/>
</dbReference>
<dbReference type="PRO" id="PR:Q92930"/>
<dbReference type="Proteomes" id="UP000005640">
    <property type="component" value="Chromosome 15"/>
</dbReference>
<dbReference type="RNAct" id="Q92930">
    <property type="molecule type" value="protein"/>
</dbReference>
<dbReference type="Bgee" id="ENSG00000166128">
    <property type="expression patterns" value="Expressed in sperm and 194 other cell types or tissues"/>
</dbReference>
<dbReference type="ExpressionAtlas" id="Q92930">
    <property type="expression patterns" value="baseline and differential"/>
</dbReference>
<dbReference type="GO" id="GO:0051286">
    <property type="term" value="C:cell tip"/>
    <property type="evidence" value="ECO:0007669"/>
    <property type="project" value="Ensembl"/>
</dbReference>
<dbReference type="GO" id="GO:0005768">
    <property type="term" value="C:endosome"/>
    <property type="evidence" value="ECO:0000318"/>
    <property type="project" value="GO_Central"/>
</dbReference>
<dbReference type="GO" id="GO:0010008">
    <property type="term" value="C:endosome membrane"/>
    <property type="evidence" value="ECO:0000314"/>
    <property type="project" value="UniProtKB"/>
</dbReference>
<dbReference type="GO" id="GO:0070062">
    <property type="term" value="C:extracellular exosome"/>
    <property type="evidence" value="ECO:0007005"/>
    <property type="project" value="UniProtKB"/>
</dbReference>
<dbReference type="GO" id="GO:0048471">
    <property type="term" value="C:perinuclear region of cytoplasm"/>
    <property type="evidence" value="ECO:0007669"/>
    <property type="project" value="Ensembl"/>
</dbReference>
<dbReference type="GO" id="GO:0005778">
    <property type="term" value="C:peroxisomal membrane"/>
    <property type="evidence" value="ECO:0000314"/>
    <property type="project" value="UniProtKB"/>
</dbReference>
<dbReference type="GO" id="GO:0045335">
    <property type="term" value="C:phagocytic vesicle"/>
    <property type="evidence" value="ECO:0000314"/>
    <property type="project" value="UniProtKB"/>
</dbReference>
<dbReference type="GO" id="GO:0030670">
    <property type="term" value="C:phagocytic vesicle membrane"/>
    <property type="evidence" value="ECO:0007669"/>
    <property type="project" value="UniProtKB-SubCell"/>
</dbReference>
<dbReference type="GO" id="GO:0005886">
    <property type="term" value="C:plasma membrane"/>
    <property type="evidence" value="ECO:0000318"/>
    <property type="project" value="GO_Central"/>
</dbReference>
<dbReference type="GO" id="GO:0055038">
    <property type="term" value="C:recycling endosome membrane"/>
    <property type="evidence" value="ECO:0000304"/>
    <property type="project" value="Reactome"/>
</dbReference>
<dbReference type="GO" id="GO:0008021">
    <property type="term" value="C:synaptic vesicle"/>
    <property type="evidence" value="ECO:0000318"/>
    <property type="project" value="GO_Central"/>
</dbReference>
<dbReference type="GO" id="GO:0030140">
    <property type="term" value="C:trans-Golgi network transport vesicle"/>
    <property type="evidence" value="ECO:0000318"/>
    <property type="project" value="GO_Central"/>
</dbReference>
<dbReference type="GO" id="GO:0019003">
    <property type="term" value="F:GDP binding"/>
    <property type="evidence" value="ECO:0000314"/>
    <property type="project" value="UniProtKB"/>
</dbReference>
<dbReference type="GO" id="GO:0005525">
    <property type="term" value="F:GTP binding"/>
    <property type="evidence" value="ECO:0007669"/>
    <property type="project" value="UniProtKB-KW"/>
</dbReference>
<dbReference type="GO" id="GO:0003924">
    <property type="term" value="F:GTPase activity"/>
    <property type="evidence" value="ECO:0000318"/>
    <property type="project" value="GO_Central"/>
</dbReference>
<dbReference type="GO" id="GO:0005102">
    <property type="term" value="F:signaling receptor binding"/>
    <property type="evidence" value="ECO:0000353"/>
    <property type="project" value="UniProtKB"/>
</dbReference>
<dbReference type="GO" id="GO:0030911">
    <property type="term" value="F:TPR domain binding"/>
    <property type="evidence" value="ECO:0007669"/>
    <property type="project" value="Ensembl"/>
</dbReference>
<dbReference type="GO" id="GO:0019882">
    <property type="term" value="P:antigen processing and presentation"/>
    <property type="evidence" value="ECO:0000315"/>
    <property type="project" value="UniProtKB"/>
</dbReference>
<dbReference type="GO" id="GO:0150115">
    <property type="term" value="P:cell-substrate junction organization"/>
    <property type="evidence" value="ECO:0000250"/>
    <property type="project" value="UniProtKB"/>
</dbReference>
<dbReference type="GO" id="GO:0032456">
    <property type="term" value="P:endocytic recycling"/>
    <property type="evidence" value="ECO:0000318"/>
    <property type="project" value="GO_Central"/>
</dbReference>
<dbReference type="GO" id="GO:0006887">
    <property type="term" value="P:exocytosis"/>
    <property type="evidence" value="ECO:0000318"/>
    <property type="project" value="GO_Central"/>
</dbReference>
<dbReference type="GO" id="GO:0031346">
    <property type="term" value="P:positive regulation of cell projection organization"/>
    <property type="evidence" value="ECO:0007669"/>
    <property type="project" value="Ensembl"/>
</dbReference>
<dbReference type="GO" id="GO:0051461">
    <property type="term" value="P:positive regulation of corticotropin secretion"/>
    <property type="evidence" value="ECO:0007669"/>
    <property type="project" value="Ensembl"/>
</dbReference>
<dbReference type="GO" id="GO:0045046">
    <property type="term" value="P:protein import into peroxisome membrane"/>
    <property type="evidence" value="ECO:0000314"/>
    <property type="project" value="UniProtKB"/>
</dbReference>
<dbReference type="CDD" id="cd01867">
    <property type="entry name" value="Rab8_Rab10_Rab13_like"/>
    <property type="match status" value="1"/>
</dbReference>
<dbReference type="FunFam" id="3.40.50.300:FF:000202">
    <property type="entry name" value="ras-related protein Rab-8A"/>
    <property type="match status" value="1"/>
</dbReference>
<dbReference type="Gene3D" id="3.40.50.300">
    <property type="entry name" value="P-loop containing nucleotide triphosphate hydrolases"/>
    <property type="match status" value="1"/>
</dbReference>
<dbReference type="InterPro" id="IPR027417">
    <property type="entry name" value="P-loop_NTPase"/>
</dbReference>
<dbReference type="InterPro" id="IPR005225">
    <property type="entry name" value="Small_GTP-bd"/>
</dbReference>
<dbReference type="InterPro" id="IPR001806">
    <property type="entry name" value="Small_GTPase"/>
</dbReference>
<dbReference type="InterPro" id="IPR050305">
    <property type="entry name" value="Small_GTPase_Rab"/>
</dbReference>
<dbReference type="NCBIfam" id="TIGR00231">
    <property type="entry name" value="small_GTP"/>
    <property type="match status" value="1"/>
</dbReference>
<dbReference type="PANTHER" id="PTHR47980">
    <property type="entry name" value="LD44762P"/>
    <property type="match status" value="1"/>
</dbReference>
<dbReference type="Pfam" id="PF00071">
    <property type="entry name" value="Ras"/>
    <property type="match status" value="1"/>
</dbReference>
<dbReference type="PRINTS" id="PR00449">
    <property type="entry name" value="RASTRNSFRMNG"/>
</dbReference>
<dbReference type="SMART" id="SM00177">
    <property type="entry name" value="ARF"/>
    <property type="match status" value="1"/>
</dbReference>
<dbReference type="SMART" id="SM00175">
    <property type="entry name" value="RAB"/>
    <property type="match status" value="1"/>
</dbReference>
<dbReference type="SMART" id="SM00176">
    <property type="entry name" value="RAN"/>
    <property type="match status" value="1"/>
</dbReference>
<dbReference type="SMART" id="SM00173">
    <property type="entry name" value="RAS"/>
    <property type="match status" value="1"/>
</dbReference>
<dbReference type="SMART" id="SM00174">
    <property type="entry name" value="RHO"/>
    <property type="match status" value="1"/>
</dbReference>
<dbReference type="SUPFAM" id="SSF52540">
    <property type="entry name" value="P-loop containing nucleoside triphosphate hydrolases"/>
    <property type="match status" value="1"/>
</dbReference>
<dbReference type="PROSITE" id="PS51419">
    <property type="entry name" value="RAB"/>
    <property type="match status" value="1"/>
</dbReference>
<feature type="chain" id="PRO_0000121134" description="Ras-related protein Rab-8B">
    <location>
        <begin position="1"/>
        <end position="204"/>
    </location>
</feature>
<feature type="propeptide" id="PRO_0000370800" description="Removed in mature form" evidence="6">
    <location>
        <begin position="205"/>
        <end position="207"/>
    </location>
</feature>
<feature type="short sequence motif" description="Switch 1" evidence="4">
    <location>
        <begin position="31"/>
        <end position="45"/>
    </location>
</feature>
<feature type="short sequence motif" description="Switch 2" evidence="4">
    <location>
        <begin position="63"/>
        <end position="80"/>
    </location>
</feature>
<feature type="binding site" evidence="2">
    <location>
        <position position="17"/>
    </location>
    <ligand>
        <name>GTP</name>
        <dbReference type="ChEBI" id="CHEBI:37565"/>
    </ligand>
</feature>
<feature type="binding site" evidence="2">
    <location>
        <position position="18"/>
    </location>
    <ligand>
        <name>GTP</name>
        <dbReference type="ChEBI" id="CHEBI:37565"/>
    </ligand>
</feature>
<feature type="binding site" evidence="2">
    <location>
        <position position="19"/>
    </location>
    <ligand>
        <name>GTP</name>
        <dbReference type="ChEBI" id="CHEBI:37565"/>
    </ligand>
</feature>
<feature type="binding site" evidence="2">
    <location>
        <position position="20"/>
    </location>
    <ligand>
        <name>GTP</name>
        <dbReference type="ChEBI" id="CHEBI:37565"/>
    </ligand>
</feature>
<feature type="binding site" evidence="2">
    <location>
        <position position="21"/>
    </location>
    <ligand>
        <name>GTP</name>
        <dbReference type="ChEBI" id="CHEBI:37565"/>
    </ligand>
</feature>
<feature type="binding site" evidence="2">
    <location>
        <position position="22"/>
    </location>
    <ligand>
        <name>GTP</name>
        <dbReference type="ChEBI" id="CHEBI:37565"/>
    </ligand>
</feature>
<feature type="binding site" evidence="2">
    <location>
        <position position="22"/>
    </location>
    <ligand>
        <name>Mg(2+)</name>
        <dbReference type="ChEBI" id="CHEBI:18420"/>
    </ligand>
</feature>
<feature type="binding site" evidence="2">
    <location>
        <position position="23"/>
    </location>
    <ligand>
        <name>GTP</name>
        <dbReference type="ChEBI" id="CHEBI:37565"/>
    </ligand>
</feature>
<feature type="binding site" evidence="2">
    <location>
        <position position="35"/>
    </location>
    <ligand>
        <name>GTP</name>
        <dbReference type="ChEBI" id="CHEBI:37565"/>
    </ligand>
</feature>
<feature type="binding site" evidence="2">
    <location>
        <position position="39"/>
    </location>
    <ligand>
        <name>GTP</name>
        <dbReference type="ChEBI" id="CHEBI:37565"/>
    </ligand>
</feature>
<feature type="binding site" evidence="2">
    <location>
        <position position="40"/>
    </location>
    <ligand>
        <name>GTP</name>
        <dbReference type="ChEBI" id="CHEBI:37565"/>
    </ligand>
</feature>
<feature type="binding site" evidence="2">
    <location>
        <position position="40"/>
    </location>
    <ligand>
        <name>Mg(2+)</name>
        <dbReference type="ChEBI" id="CHEBI:18420"/>
    </ligand>
</feature>
<feature type="binding site" evidence="2">
    <location>
        <position position="63"/>
    </location>
    <ligand>
        <name>Mg(2+)</name>
        <dbReference type="ChEBI" id="CHEBI:18420"/>
    </ligand>
</feature>
<feature type="binding site" evidence="2">
    <location>
        <position position="66"/>
    </location>
    <ligand>
        <name>GTP</name>
        <dbReference type="ChEBI" id="CHEBI:37565"/>
    </ligand>
</feature>
<feature type="binding site" evidence="2">
    <location>
        <position position="121"/>
    </location>
    <ligand>
        <name>GTP</name>
        <dbReference type="ChEBI" id="CHEBI:37565"/>
    </ligand>
</feature>
<feature type="binding site" evidence="2">
    <location>
        <position position="122"/>
    </location>
    <ligand>
        <name>GTP</name>
        <dbReference type="ChEBI" id="CHEBI:37565"/>
    </ligand>
</feature>
<feature type="binding site" evidence="2">
    <location>
        <position position="124"/>
    </location>
    <ligand>
        <name>GTP</name>
        <dbReference type="ChEBI" id="CHEBI:37565"/>
    </ligand>
</feature>
<feature type="binding site" evidence="2">
    <location>
        <position position="152"/>
    </location>
    <ligand>
        <name>GTP</name>
        <dbReference type="ChEBI" id="CHEBI:37565"/>
    </ligand>
</feature>
<feature type="binding site" evidence="2">
    <location>
        <position position="153"/>
    </location>
    <ligand>
        <name>GTP</name>
        <dbReference type="ChEBI" id="CHEBI:37565"/>
    </ligand>
</feature>
<feature type="modified residue" description="Phosphothreonine; by LRRK2" evidence="9">
    <location>
        <position position="72"/>
    </location>
</feature>
<feature type="modified residue" description="Phosphoserine" evidence="3">
    <location>
        <position position="180"/>
    </location>
</feature>
<feature type="modified residue" description="Cysteine methyl ester" evidence="6">
    <location>
        <position position="204"/>
    </location>
</feature>
<feature type="lipid moiety-binding region" description="S-geranylgeranyl cysteine" evidence="1">
    <location>
        <position position="204"/>
    </location>
</feature>
<feature type="mutagenesis site" description="Loss of phosphorylation. No effect on GDI1 and GDI2 binding. Reduced binding to CHM and CHML." evidence="9">
    <original>T</original>
    <variation>A</variation>
    <location>
        <position position="72"/>
    </location>
</feature>
<feature type="mutagenesis site" description="Phosphomimetic mutant. Loss of binding to GDI1, GDI2, CHM, and CHML." evidence="9">
    <original>T</original>
    <variation>E</variation>
    <location>
        <position position="72"/>
    </location>
</feature>
<comment type="function">
    <text evidence="2 5 10 11">The small GTPases Rab are key regulators of intracellular membrane trafficking, from the formation of transport vesicles to their fusion with membranes. Rabs cycle between an inactive GDP-bound form and an active GTP-bound form that is able to recruit to membranes different sets of downstream effectors directly responsible for vesicle formation, movement, tethering and fusion (By similarity). RAB8B may be involved in polarized vesicular trafficking and neurotransmitter release (Probable). May participate in cell junction dynamics in Sertoli cells (By similarity). May also participate in the export of a subset of neosynthesized proteins through a Rab8-Rab10-Rab11-dependent endososomal export route (PubMed:32344433).</text>
</comment>
<comment type="catalytic activity">
    <reaction evidence="2">
        <text>GTP + H2O = GDP + phosphate + H(+)</text>
        <dbReference type="Rhea" id="RHEA:19669"/>
        <dbReference type="ChEBI" id="CHEBI:15377"/>
        <dbReference type="ChEBI" id="CHEBI:15378"/>
        <dbReference type="ChEBI" id="CHEBI:37565"/>
        <dbReference type="ChEBI" id="CHEBI:43474"/>
        <dbReference type="ChEBI" id="CHEBI:58189"/>
        <dbReference type="EC" id="3.6.5.2"/>
    </reaction>
    <physiologicalReaction direction="left-to-right" evidence="2">
        <dbReference type="Rhea" id="RHEA:19670"/>
    </physiologicalReaction>
</comment>
<comment type="cofactor">
    <cofactor evidence="2">
        <name>Mg(2+)</name>
        <dbReference type="ChEBI" id="CHEBI:18420"/>
    </cofactor>
</comment>
<comment type="activity regulation">
    <text evidence="7 11">Regulated by guanine nucleotide exchange factors (GEFs) including RAB3IP/RABIN8 which promotes the exchange of bound GDP for free GTP (PubMed:12221131). Regulated by GTPase activating proteins (GAPs) which increase the GTP hydrolysis activity. Inhibited by GDP dissociation inhibitors (GDIs) (Probable).</text>
</comment>
<comment type="subunit">
    <text evidence="3 5 7 9 10">Associated with actin, delta-catenin and alpha and beta tubulins (By similarity). Interacts with OTOF (By similarity). Interacts with PEX5R (By similarity). Interacts with RAB3IP (PubMed:12221131). Interacts with VIM (By similarity). Interacts with CDH1 (By similarity). Interacts with MICALL2 (By similarity). Interacts with GDI1, GDI2, CHML and CHM; phosphorylation at Thr-72 disrupts these interactions (PubMed:29125462). Interacts with MICAL1 (PubMed:32344433).</text>
</comment>
<comment type="subcellular location">
    <subcellularLocation>
        <location evidence="11">Cell membrane</location>
        <topology evidence="11">Lipid-anchor</topology>
        <orientation evidence="11">Cytoplasmic side</orientation>
    </subcellularLocation>
    <subcellularLocation>
        <location evidence="8">Cytoplasmic vesicle</location>
        <location evidence="8">Phagosome</location>
    </subcellularLocation>
    <subcellularLocation>
        <location evidence="8">Cytoplasmic vesicle</location>
        <location evidence="8">Phagosome membrane</location>
        <topology evidence="8">Lipid-anchor</topology>
        <orientation evidence="8">Cytoplasmic side</orientation>
    </subcellularLocation>
    <subcellularLocation>
        <location evidence="10">Endosome membrane</location>
    </subcellularLocation>
    <text evidence="10">Recruited to phagosomes containing S.aureus or M.tuberculosis. Colocalized with MICAL1, GRAF1/ARHGAP26 and GRAF2/ARHGAP10 on endosomal tubules (PubMed:32344433).</text>
</comment>
<comment type="domain">
    <text evidence="4">Switch 1, switch 2 and the interswitch regions are characteristic of Rab GTPases and mediate the interactions with Rab downstream effectors. The switch regions undergo conformational changes upon nucleotide binding which drives interaction with specific sets of effector proteins, with most effectors only binding to GTP-bound Rab.</text>
</comment>
<comment type="PTM">
    <text evidence="9">Phosphorylation of Thr-72 in the switch II region by LRRK2 prevents the association of RAB regulatory proteins, including CHM, CHML and RAB GDP dissociation inhibitors GDI1 and GDI2.</text>
</comment>
<comment type="similarity">
    <text evidence="11">Belongs to the small GTPase superfamily. Rab family.</text>
</comment>